<evidence type="ECO:0000255" key="1">
    <source>
        <dbReference type="HAMAP-Rule" id="MF_01961"/>
    </source>
</evidence>
<sequence>MLKTVLMPSPSKCSLMAKRDQDWSPNQLRLDILDQNARDADPRGTGFDYAEEFQELDLDAVKADLEELMTSSQDWWPADYGHYGPLFIRMAWHSAGTYRTTDGRGGASGGRQRFAPLNSWPDNANLDKARRLLWPIKKKYGRKLSWADLIVLAGNHAIESMGLKTFGWAGGREDAFEPDEAVDWGPEDEMEAHQSERRTDDGELKEPLGAAVMGLIYVDPEGPNGNPDPLASAENIRESFGRMAMNDEETAALIAGGHTFGKVHGADDPEENLGDVPEDAPIEQMGLGWENDYGSGKAGDTITSGIEGPWTQAPIEWDNGYIDNLLDYEWEPEKGPGGAWQWTPTDEALANTVPDAHDPSEKQTPMMLTTDIALKRDPDYREVMERFQENPMEFGINFARAWYKLIHRDMGPPERFLGPDAPDEEMIWQDPVPDVDHDLIGDEEVAELKTDILETDLTVSQLVKTAWASASTYRDSDKRGGANGARIRLEPQKNWEVNEPAQLETVLATLEEIQAEFNSARTDDTRVSLADLIVLGGNAAVEQAAADAGYDVTVPFEPGRTDATPEQTDVDSFEALKPRADGFRNYARDDVDVPAEELLVDRADLLDLTPEEMTVLVGGLRSLGATYQDSDLGVFTDEPGTLTNDFFEVVLGMDTEWEPVSESKDVFEGYDRETGEQTWAASRVDLIFGSHSRLRAIAEVYGADGAEAELVDDFVDAWHKVMRLDRFDLE</sequence>
<name>KATG1_HALMA</name>
<feature type="chain" id="PRO_0000354965" description="Catalase-peroxidase 1">
    <location>
        <begin position="1"/>
        <end position="730"/>
    </location>
</feature>
<feature type="active site" description="Proton acceptor" evidence="1">
    <location>
        <position position="93"/>
    </location>
</feature>
<feature type="binding site" description="axial binding residue" evidence="1">
    <location>
        <position position="258"/>
    </location>
    <ligand>
        <name>heme b</name>
        <dbReference type="ChEBI" id="CHEBI:60344"/>
    </ligand>
    <ligandPart>
        <name>Fe</name>
        <dbReference type="ChEBI" id="CHEBI:18248"/>
    </ligandPart>
</feature>
<feature type="site" description="Transition state stabilizer" evidence="1">
    <location>
        <position position="89"/>
    </location>
</feature>
<feature type="cross-link" description="Tryptophyl-tyrosyl-methioninium (Trp-Tyr) (with M-243)" evidence="1">
    <location>
        <begin position="92"/>
        <end position="217"/>
    </location>
</feature>
<feature type="cross-link" description="Tryptophyl-tyrosyl-methioninium (Tyr-Met) (with W-92)" evidence="1">
    <location>
        <begin position="217"/>
        <end position="243"/>
    </location>
</feature>
<comment type="function">
    <text evidence="1">Bifunctional enzyme with both catalase and broad-spectrum peroxidase activity.</text>
</comment>
<comment type="catalytic activity">
    <reaction evidence="1">
        <text>H2O2 + AH2 = A + 2 H2O</text>
        <dbReference type="Rhea" id="RHEA:30275"/>
        <dbReference type="ChEBI" id="CHEBI:13193"/>
        <dbReference type="ChEBI" id="CHEBI:15377"/>
        <dbReference type="ChEBI" id="CHEBI:16240"/>
        <dbReference type="ChEBI" id="CHEBI:17499"/>
        <dbReference type="EC" id="1.11.1.21"/>
    </reaction>
</comment>
<comment type="catalytic activity">
    <reaction evidence="1">
        <text>2 H2O2 = O2 + 2 H2O</text>
        <dbReference type="Rhea" id="RHEA:20309"/>
        <dbReference type="ChEBI" id="CHEBI:15377"/>
        <dbReference type="ChEBI" id="CHEBI:15379"/>
        <dbReference type="ChEBI" id="CHEBI:16240"/>
        <dbReference type="EC" id="1.11.1.21"/>
    </reaction>
</comment>
<comment type="cofactor">
    <cofactor evidence="1">
        <name>heme b</name>
        <dbReference type="ChEBI" id="CHEBI:60344"/>
    </cofactor>
    <text evidence="1">Binds 1 heme b (iron(II)-protoporphyrin IX) group per dimer.</text>
</comment>
<comment type="subunit">
    <text evidence="1">Homodimer or homotetramer.</text>
</comment>
<comment type="PTM">
    <text evidence="1">Formation of the three residue Trp-Tyr-Met cross-link is important for the catalase, but not the peroxidase activity of the enzyme.</text>
</comment>
<comment type="similarity">
    <text evidence="1">Belongs to the peroxidase family. Peroxidase/catalase subfamily.</text>
</comment>
<accession>Q5V0S5</accession>
<reference key="1">
    <citation type="journal article" date="2004" name="Genome Res.">
        <title>Genome sequence of Haloarcula marismortui: a halophilic archaeon from the Dead Sea.</title>
        <authorList>
            <person name="Baliga N.S."/>
            <person name="Bonneau R."/>
            <person name="Facciotti M.T."/>
            <person name="Pan M."/>
            <person name="Glusman G."/>
            <person name="Deutsch E.W."/>
            <person name="Shannon P."/>
            <person name="Chiu Y."/>
            <person name="Weng R.S."/>
            <person name="Gan R.R."/>
            <person name="Hung P."/>
            <person name="Date S.V."/>
            <person name="Marcotte E."/>
            <person name="Hood L."/>
            <person name="Ng W.V."/>
        </authorList>
    </citation>
    <scope>NUCLEOTIDE SEQUENCE [LARGE SCALE GENOMIC DNA]</scope>
    <source>
        <strain>ATCC 43049 / DSM 3752 / JCM 8966 / VKM B-1809</strain>
    </source>
</reference>
<dbReference type="EC" id="1.11.1.21" evidence="1"/>
<dbReference type="EMBL" id="AY596297">
    <property type="protein sequence ID" value="AAV46878.1"/>
    <property type="molecule type" value="Genomic_DNA"/>
</dbReference>
<dbReference type="SMR" id="Q5V0S5"/>
<dbReference type="STRING" id="272569.rrnAC2018"/>
<dbReference type="PeroxiBase" id="3064">
    <property type="entry name" value="HmaCP02"/>
</dbReference>
<dbReference type="PaxDb" id="272569-rrnAC2018"/>
<dbReference type="EnsemblBacteria" id="AAV46878">
    <property type="protein sequence ID" value="AAV46878"/>
    <property type="gene ID" value="rrnAC2018"/>
</dbReference>
<dbReference type="KEGG" id="hma:rrnAC2018"/>
<dbReference type="PATRIC" id="fig|272569.17.peg.2672"/>
<dbReference type="eggNOG" id="arCOG04487">
    <property type="taxonomic scope" value="Archaea"/>
</dbReference>
<dbReference type="HOGENOM" id="CLU_025424_2_0_2"/>
<dbReference type="Proteomes" id="UP000001169">
    <property type="component" value="Chromosome I"/>
</dbReference>
<dbReference type="GO" id="GO:0005829">
    <property type="term" value="C:cytosol"/>
    <property type="evidence" value="ECO:0007669"/>
    <property type="project" value="TreeGrafter"/>
</dbReference>
<dbReference type="GO" id="GO:0004096">
    <property type="term" value="F:catalase activity"/>
    <property type="evidence" value="ECO:0007669"/>
    <property type="project" value="UniProtKB-UniRule"/>
</dbReference>
<dbReference type="GO" id="GO:0020037">
    <property type="term" value="F:heme binding"/>
    <property type="evidence" value="ECO:0007669"/>
    <property type="project" value="InterPro"/>
</dbReference>
<dbReference type="GO" id="GO:0046872">
    <property type="term" value="F:metal ion binding"/>
    <property type="evidence" value="ECO:0007669"/>
    <property type="project" value="UniProtKB-KW"/>
</dbReference>
<dbReference type="GO" id="GO:0070301">
    <property type="term" value="P:cellular response to hydrogen peroxide"/>
    <property type="evidence" value="ECO:0007669"/>
    <property type="project" value="TreeGrafter"/>
</dbReference>
<dbReference type="GO" id="GO:0042744">
    <property type="term" value="P:hydrogen peroxide catabolic process"/>
    <property type="evidence" value="ECO:0007669"/>
    <property type="project" value="UniProtKB-KW"/>
</dbReference>
<dbReference type="CDD" id="cd00649">
    <property type="entry name" value="catalase_peroxidase_1"/>
    <property type="match status" value="1"/>
</dbReference>
<dbReference type="CDD" id="cd08200">
    <property type="entry name" value="catalase_peroxidase_2"/>
    <property type="match status" value="1"/>
</dbReference>
<dbReference type="FunFam" id="1.10.420.10:FF:000004">
    <property type="entry name" value="Catalase-peroxidase"/>
    <property type="match status" value="1"/>
</dbReference>
<dbReference type="FunFam" id="1.10.520.10:FF:000002">
    <property type="entry name" value="Catalase-peroxidase"/>
    <property type="match status" value="1"/>
</dbReference>
<dbReference type="Gene3D" id="1.10.520.10">
    <property type="match status" value="2"/>
</dbReference>
<dbReference type="Gene3D" id="1.10.420.10">
    <property type="entry name" value="Peroxidase, domain 2"/>
    <property type="match status" value="2"/>
</dbReference>
<dbReference type="HAMAP" id="MF_01961">
    <property type="entry name" value="Catal_peroxid"/>
    <property type="match status" value="1"/>
</dbReference>
<dbReference type="InterPro" id="IPR000763">
    <property type="entry name" value="Catalase_peroxidase"/>
</dbReference>
<dbReference type="InterPro" id="IPR002016">
    <property type="entry name" value="Haem_peroxidase"/>
</dbReference>
<dbReference type="InterPro" id="IPR010255">
    <property type="entry name" value="Haem_peroxidase_sf"/>
</dbReference>
<dbReference type="InterPro" id="IPR019794">
    <property type="entry name" value="Peroxidases_AS"/>
</dbReference>
<dbReference type="InterPro" id="IPR019793">
    <property type="entry name" value="Peroxidases_heam-ligand_BS"/>
</dbReference>
<dbReference type="NCBIfam" id="TIGR00198">
    <property type="entry name" value="cat_per_HPI"/>
    <property type="match status" value="1"/>
</dbReference>
<dbReference type="NCBIfam" id="NF011635">
    <property type="entry name" value="PRK15061.1"/>
    <property type="match status" value="1"/>
</dbReference>
<dbReference type="PANTHER" id="PTHR30555:SF0">
    <property type="entry name" value="CATALASE-PEROXIDASE"/>
    <property type="match status" value="1"/>
</dbReference>
<dbReference type="PANTHER" id="PTHR30555">
    <property type="entry name" value="HYDROPEROXIDASE I, BIFUNCTIONAL CATALASE-PEROXIDASE"/>
    <property type="match status" value="1"/>
</dbReference>
<dbReference type="Pfam" id="PF00141">
    <property type="entry name" value="peroxidase"/>
    <property type="match status" value="2"/>
</dbReference>
<dbReference type="PRINTS" id="PR00460">
    <property type="entry name" value="BPEROXIDASE"/>
</dbReference>
<dbReference type="PRINTS" id="PR00458">
    <property type="entry name" value="PEROXIDASE"/>
</dbReference>
<dbReference type="SUPFAM" id="SSF48113">
    <property type="entry name" value="Heme-dependent peroxidases"/>
    <property type="match status" value="2"/>
</dbReference>
<dbReference type="PROSITE" id="PS00435">
    <property type="entry name" value="PEROXIDASE_1"/>
    <property type="match status" value="1"/>
</dbReference>
<dbReference type="PROSITE" id="PS00436">
    <property type="entry name" value="PEROXIDASE_2"/>
    <property type="match status" value="1"/>
</dbReference>
<dbReference type="PROSITE" id="PS50873">
    <property type="entry name" value="PEROXIDASE_4"/>
    <property type="match status" value="1"/>
</dbReference>
<organism>
    <name type="scientific">Haloarcula marismortui (strain ATCC 43049 / DSM 3752 / JCM 8966 / VKM B-1809)</name>
    <name type="common">Halobacterium marismortui</name>
    <dbReference type="NCBI Taxonomy" id="272569"/>
    <lineage>
        <taxon>Archaea</taxon>
        <taxon>Methanobacteriati</taxon>
        <taxon>Methanobacteriota</taxon>
        <taxon>Stenosarchaea group</taxon>
        <taxon>Halobacteria</taxon>
        <taxon>Halobacteriales</taxon>
        <taxon>Haloarculaceae</taxon>
        <taxon>Haloarcula</taxon>
    </lineage>
</organism>
<proteinExistence type="inferred from homology"/>
<protein>
    <recommendedName>
        <fullName evidence="1">Catalase-peroxidase 1</fullName>
        <shortName evidence="1">CP 1</shortName>
        <ecNumber evidence="1">1.11.1.21</ecNumber>
    </recommendedName>
    <alternativeName>
        <fullName evidence="1">Peroxidase/catalase 1</fullName>
    </alternativeName>
</protein>
<keyword id="KW-0349">Heme</keyword>
<keyword id="KW-0376">Hydrogen peroxide</keyword>
<keyword id="KW-0408">Iron</keyword>
<keyword id="KW-0479">Metal-binding</keyword>
<keyword id="KW-0560">Oxidoreductase</keyword>
<keyword id="KW-0575">Peroxidase</keyword>
<keyword id="KW-1185">Reference proteome</keyword>
<gene>
    <name evidence="1" type="primary">katG1</name>
    <name type="ordered locus">rrnAC2018</name>
</gene>